<gene>
    <name type="primary">sirC</name>
</gene>
<reference key="1">
    <citation type="journal article" date="2003" name="Biochem. J.">
        <title>Identification and functional analysis of enzymes required for precorrin-2 dehydrogenation and metal ion insertion in the biosynthesis of sirohaem and cobalamin in Bacillus megaterium.</title>
        <authorList>
            <person name="Raux E."/>
            <person name="Leech H.K."/>
            <person name="Beck R."/>
            <person name="Schubert H.L."/>
            <person name="Santander P.J."/>
            <person name="Roessner C.A."/>
            <person name="Scott A.I."/>
            <person name="Martens J.H."/>
            <person name="Jahn D."/>
            <person name="Thermes C."/>
            <person name="Rambach A."/>
            <person name="Warren M.J."/>
        </authorList>
    </citation>
    <scope>NUCLEOTIDE SEQUENCE [GENOMIC DNA]</scope>
    <scope>FUNCTION</scope>
    <scope>CATALYTIC ACTIVITY</scope>
    <scope>SUBSTRATE SPECIFICITY</scope>
    <scope>SUBUNIT</scope>
    <source>
        <strain>DSM 509 / CCM 1464 / NBRC 12109</strain>
    </source>
</reference>
<reference key="2">
    <citation type="journal article" date="2008" name="Biochem. J.">
        <title>Structure and function of SirC from Bacillus megaterium: a metal-binding precorrin-2 dehydrogenase.</title>
        <authorList>
            <person name="Schubert H.L."/>
            <person name="Rose R.S."/>
            <person name="Leech H.K."/>
            <person name="Brindley A.A."/>
            <person name="Hill C.P."/>
            <person name="Rigby S.E."/>
            <person name="Warren M.J."/>
        </authorList>
    </citation>
    <scope>X-RAY CRYSTALLOGRAPHY (2.3 ANGSTROMS)</scope>
    <scope>FUNCTION</scope>
    <scope>CATALYTIC ACTIVITY</scope>
    <scope>MUTAGENESIS OF ASN-98; SER-101; SER-102; ASP-105 AND SER-124</scope>
    <scope>SUBUNIT</scope>
</reference>
<feature type="chain" id="PRO_0000097773" description="Precorrin-2 dehydrogenase">
    <location>
        <begin position="1"/>
        <end position="202"/>
    </location>
</feature>
<feature type="binding site" evidence="1">
    <location>
        <begin position="20"/>
        <end position="21"/>
    </location>
    <ligand>
        <name>NAD(+)</name>
        <dbReference type="ChEBI" id="CHEBI:57540"/>
    </ligand>
</feature>
<feature type="binding site" evidence="1">
    <location>
        <begin position="41"/>
        <end position="42"/>
    </location>
    <ligand>
        <name>NAD(+)</name>
        <dbReference type="ChEBI" id="CHEBI:57540"/>
    </ligand>
</feature>
<feature type="mutagenesis site" description="4-fold decrease in the dehydrogenase activity." evidence="3">
    <original>N</original>
    <variation>A</variation>
    <location>
        <position position="98"/>
    </location>
</feature>
<feature type="mutagenesis site" description="1.4-fold increase in the dehydrogenase activity." evidence="3">
    <original>S</original>
    <variation>A</variation>
    <location>
        <position position="101"/>
    </location>
</feature>
<feature type="mutagenesis site" description="2.8-fold increase in the dehydrogenase activity." evidence="3">
    <original>S</original>
    <variation>D</variation>
    <location>
        <position position="101"/>
    </location>
</feature>
<feature type="mutagenesis site" description="2.3-fold increase in the dehydrogenase activity." evidence="3">
    <original>S</original>
    <variation>A</variation>
    <location>
        <position position="102"/>
    </location>
</feature>
<feature type="mutagenesis site" description="3.2-fold increase in the dehydrogenase activity." evidence="3">
    <original>D</original>
    <variation>A</variation>
    <location>
        <position position="105"/>
    </location>
</feature>
<feature type="mutagenesis site" description="3-fold decrease in the dehydrogenase activity." evidence="3">
    <original>S</original>
    <variation>A</variation>
    <location>
        <position position="124"/>
    </location>
</feature>
<feature type="strand" evidence="5">
    <location>
        <begin position="3"/>
        <end position="6"/>
    </location>
</feature>
<feature type="strand" evidence="5">
    <location>
        <begin position="13"/>
        <end position="16"/>
    </location>
</feature>
<feature type="helix" evidence="5">
    <location>
        <begin position="20"/>
        <end position="29"/>
    </location>
</feature>
<feature type="helix" evidence="5">
    <location>
        <begin position="30"/>
        <end position="32"/>
    </location>
</feature>
<feature type="strand" evidence="5">
    <location>
        <begin position="36"/>
        <end position="39"/>
    </location>
</feature>
<feature type="helix" evidence="5">
    <location>
        <begin position="45"/>
        <end position="52"/>
    </location>
</feature>
<feature type="strand" evidence="5">
    <location>
        <begin position="57"/>
        <end position="59"/>
    </location>
</feature>
<feature type="helix" evidence="5">
    <location>
        <begin position="65"/>
        <end position="67"/>
    </location>
</feature>
<feature type="strand" evidence="5">
    <location>
        <begin position="68"/>
        <end position="70"/>
    </location>
</feature>
<feature type="strand" evidence="5">
    <location>
        <begin position="72"/>
        <end position="76"/>
    </location>
</feature>
<feature type="helix" evidence="5">
    <location>
        <begin position="82"/>
        <end position="90"/>
    </location>
</feature>
<feature type="strand" evidence="5">
    <location>
        <begin position="96"/>
        <end position="98"/>
    </location>
</feature>
<feature type="strand" evidence="5">
    <location>
        <begin position="107"/>
        <end position="109"/>
    </location>
</feature>
<feature type="strand" evidence="5">
    <location>
        <begin position="112"/>
        <end position="116"/>
    </location>
</feature>
<feature type="strand" evidence="5">
    <location>
        <begin position="119"/>
        <end position="124"/>
    </location>
</feature>
<feature type="helix" evidence="5">
    <location>
        <begin position="130"/>
        <end position="143"/>
    </location>
</feature>
<feature type="helix" evidence="5">
    <location>
        <begin position="147"/>
        <end position="164"/>
    </location>
</feature>
<feature type="helix" evidence="5">
    <location>
        <begin position="169"/>
        <end position="178"/>
    </location>
</feature>
<feature type="helix" evidence="5">
    <location>
        <begin position="182"/>
        <end position="186"/>
    </location>
</feature>
<feature type="helix" evidence="5">
    <location>
        <begin position="188"/>
        <end position="199"/>
    </location>
</feature>
<accession>P61818</accession>
<comment type="function">
    <text evidence="2 3">Catalyzes the dehydrogenation of precorrin-2 to form sirohydrochlorin which is used as a precursor in both siroheme biosynthesis and in the anaerobic branch of adenosylcobalamin biosynthesis. It is unable to oxidize precorrin-3.</text>
</comment>
<comment type="catalytic activity">
    <reaction evidence="2 3">
        <text>precorrin-2 + NAD(+) = sirohydrochlorin + NADH + 2 H(+)</text>
        <dbReference type="Rhea" id="RHEA:15613"/>
        <dbReference type="ChEBI" id="CHEBI:15378"/>
        <dbReference type="ChEBI" id="CHEBI:57540"/>
        <dbReference type="ChEBI" id="CHEBI:57945"/>
        <dbReference type="ChEBI" id="CHEBI:58351"/>
        <dbReference type="ChEBI" id="CHEBI:58827"/>
        <dbReference type="EC" id="1.3.1.76"/>
    </reaction>
</comment>
<comment type="pathway">
    <text>Cofactor biosynthesis; adenosylcobalamin biosynthesis; sirohydrochlorin from precorrin-2: step 1/1.</text>
</comment>
<comment type="pathway">
    <text>Porphyrin-containing compound metabolism; siroheme biosynthesis; sirohydrochlorin from precorrin-2: step 1/1.</text>
</comment>
<comment type="subunit">
    <text evidence="2 3">Homodimer.</text>
</comment>
<comment type="similarity">
    <text evidence="4">Belongs to the precorrin-2 dehydrogenase / sirohydrochlorin ferrochelatase family.</text>
</comment>
<dbReference type="EC" id="1.3.1.76"/>
<dbReference type="EMBL" id="AJ509159">
    <property type="protein sequence ID" value="CAD48923.1"/>
    <property type="molecule type" value="Genomic_DNA"/>
</dbReference>
<dbReference type="RefSeq" id="WP_116077515.1">
    <property type="nucleotide sequence ID" value="NZ_JAROZX010000013.1"/>
</dbReference>
<dbReference type="PDB" id="3DFZ">
    <property type="method" value="X-ray"/>
    <property type="resolution" value="2.30 A"/>
    <property type="chains" value="A/B=1-202"/>
</dbReference>
<dbReference type="PDBsum" id="3DFZ"/>
<dbReference type="SMR" id="P61818"/>
<dbReference type="BioCyc" id="MetaCyc:MONOMER-18855"/>
<dbReference type="BRENDA" id="1.3.1.76">
    <property type="organism ID" value="656"/>
</dbReference>
<dbReference type="UniPathway" id="UPA00148">
    <property type="reaction ID" value="UER00222"/>
</dbReference>
<dbReference type="UniPathway" id="UPA00262">
    <property type="reaction ID" value="UER00222"/>
</dbReference>
<dbReference type="EvolutionaryTrace" id="P61818"/>
<dbReference type="GO" id="GO:0004325">
    <property type="term" value="F:ferrochelatase activity"/>
    <property type="evidence" value="ECO:0007669"/>
    <property type="project" value="InterPro"/>
</dbReference>
<dbReference type="GO" id="GO:0043115">
    <property type="term" value="F:precorrin-2 dehydrogenase activity"/>
    <property type="evidence" value="ECO:0007669"/>
    <property type="project" value="UniProtKB-EC"/>
</dbReference>
<dbReference type="GO" id="GO:0009236">
    <property type="term" value="P:cobalamin biosynthetic process"/>
    <property type="evidence" value="ECO:0007669"/>
    <property type="project" value="UniProtKB-UniPathway"/>
</dbReference>
<dbReference type="GO" id="GO:0019354">
    <property type="term" value="P:siroheme biosynthetic process"/>
    <property type="evidence" value="ECO:0007669"/>
    <property type="project" value="UniProtKB-UniPathway"/>
</dbReference>
<dbReference type="Gene3D" id="3.40.50.720">
    <property type="entry name" value="NAD(P)-binding Rossmann-like Domain"/>
    <property type="match status" value="1"/>
</dbReference>
<dbReference type="Gene3D" id="1.10.8.610">
    <property type="entry name" value="SirC, precorrin-2 dehydrogenase, C-terminal helical domain-like"/>
    <property type="match status" value="1"/>
</dbReference>
<dbReference type="InterPro" id="IPR028161">
    <property type="entry name" value="Met8-like"/>
</dbReference>
<dbReference type="InterPro" id="IPR036291">
    <property type="entry name" value="NAD(P)-bd_dom_sf"/>
</dbReference>
<dbReference type="InterPro" id="IPR042518">
    <property type="entry name" value="SirC_C"/>
</dbReference>
<dbReference type="InterPro" id="IPR028281">
    <property type="entry name" value="Sirohaem_synthase_central"/>
</dbReference>
<dbReference type="InterPro" id="IPR006367">
    <property type="entry name" value="Sirohaem_synthase_N"/>
</dbReference>
<dbReference type="NCBIfam" id="TIGR01470">
    <property type="entry name" value="cysG_Nterm"/>
    <property type="match status" value="1"/>
</dbReference>
<dbReference type="NCBIfam" id="NF005222">
    <property type="entry name" value="PRK06718.1"/>
    <property type="match status" value="1"/>
</dbReference>
<dbReference type="PANTHER" id="PTHR35330">
    <property type="entry name" value="SIROHEME BIOSYNTHESIS PROTEIN MET8"/>
    <property type="match status" value="1"/>
</dbReference>
<dbReference type="PANTHER" id="PTHR35330:SF1">
    <property type="entry name" value="SIROHEME BIOSYNTHESIS PROTEIN MET8"/>
    <property type="match status" value="1"/>
</dbReference>
<dbReference type="Pfam" id="PF13241">
    <property type="entry name" value="NAD_binding_7"/>
    <property type="match status" value="1"/>
</dbReference>
<dbReference type="Pfam" id="PF22440">
    <property type="entry name" value="SirC_C"/>
    <property type="match status" value="1"/>
</dbReference>
<dbReference type="Pfam" id="PF14824">
    <property type="entry name" value="Sirohm_synth_M"/>
    <property type="match status" value="1"/>
</dbReference>
<dbReference type="SUPFAM" id="SSF51735">
    <property type="entry name" value="NAD(P)-binding Rossmann-fold domains"/>
    <property type="match status" value="1"/>
</dbReference>
<dbReference type="SUPFAM" id="SSF75615">
    <property type="entry name" value="Siroheme synthase middle domains-like"/>
    <property type="match status" value="1"/>
</dbReference>
<sequence length="202" mass="22970">MYTVMLDLKGRSVLVVGGGTIATRRIKGFLQEGAAITVVAPTVSAEINEWEAKGQLRVKRKKVGEEDLLNVFFIVVATNDQAVNKFVKQHIKNDQLVNMASSFSDGNIQIPAQFSRGRLSLAISTDGASPLLTKRIKEDLSSNYDESYTQYTQFLYECRVLIHRLNVSKSRKHELLTEIIDDQYRLSLVKQREFLQQIEKYK</sequence>
<organism>
    <name type="scientific">Priestia megaterium</name>
    <name type="common">Bacillus megaterium</name>
    <dbReference type="NCBI Taxonomy" id="1404"/>
    <lineage>
        <taxon>Bacteria</taxon>
        <taxon>Bacillati</taxon>
        <taxon>Bacillota</taxon>
        <taxon>Bacilli</taxon>
        <taxon>Bacillales</taxon>
        <taxon>Bacillaceae</taxon>
        <taxon>Priestia</taxon>
    </lineage>
</organism>
<evidence type="ECO:0000250" key="1"/>
<evidence type="ECO:0000269" key="2">
    <source>
    </source>
</evidence>
<evidence type="ECO:0000269" key="3">
    <source>
    </source>
</evidence>
<evidence type="ECO:0000305" key="4"/>
<evidence type="ECO:0007829" key="5">
    <source>
        <dbReference type="PDB" id="3DFZ"/>
    </source>
</evidence>
<name>SIRC_PRIMG</name>
<proteinExistence type="evidence at protein level"/>
<keyword id="KW-0002">3D-structure</keyword>
<keyword id="KW-0169">Cobalamin biosynthesis</keyword>
<keyword id="KW-0520">NAD</keyword>
<keyword id="KW-0560">Oxidoreductase</keyword>
<keyword id="KW-0627">Porphyrin biosynthesis</keyword>
<protein>
    <recommendedName>
        <fullName>Precorrin-2 dehydrogenase</fullName>
        <ecNumber>1.3.1.76</ecNumber>
    </recommendedName>
</protein>